<accession>B0RW57</accession>
<protein>
    <recommendedName>
        <fullName evidence="1">Bifunctional uridylyltransferase/uridylyl-removing enzyme</fullName>
        <shortName evidence="1">UTase/UR</shortName>
    </recommendedName>
    <alternativeName>
        <fullName evidence="1">Bifunctional [protein-PII] modification enzyme</fullName>
    </alternativeName>
    <alternativeName>
        <fullName evidence="1">Bifunctional nitrogen sensor protein</fullName>
    </alternativeName>
    <domain>
        <recommendedName>
            <fullName evidence="1">[Protein-PII] uridylyltransferase</fullName>
            <shortName evidence="1">PII uridylyltransferase</shortName>
            <shortName evidence="1">UTase</shortName>
            <ecNumber evidence="1">2.7.7.59</ecNumber>
        </recommendedName>
    </domain>
    <domain>
        <recommendedName>
            <fullName evidence="1">[Protein-PII]-UMP uridylyl-removing enzyme</fullName>
            <shortName evidence="1">UR</shortName>
            <ecNumber evidence="1">3.1.4.-</ecNumber>
        </recommendedName>
    </domain>
</protein>
<proteinExistence type="inferred from homology"/>
<comment type="function">
    <text evidence="1">Modifies, by uridylylation and deuridylylation, the PII regulatory proteins (GlnB and homologs), in response to the nitrogen status of the cell that GlnD senses through the glutamine level. Under low glutamine levels, catalyzes the conversion of the PII proteins and UTP to PII-UMP and PPi, while under higher glutamine levels, GlnD hydrolyzes PII-UMP to PII and UMP (deuridylylation). Thus, controls uridylylation state and activity of the PII proteins, and plays an important role in the regulation of nitrogen assimilation and metabolism.</text>
</comment>
<comment type="catalytic activity">
    <reaction evidence="1">
        <text>[protein-PII]-L-tyrosine + UTP = [protein-PII]-uridylyl-L-tyrosine + diphosphate</text>
        <dbReference type="Rhea" id="RHEA:13673"/>
        <dbReference type="Rhea" id="RHEA-COMP:12147"/>
        <dbReference type="Rhea" id="RHEA-COMP:12148"/>
        <dbReference type="ChEBI" id="CHEBI:33019"/>
        <dbReference type="ChEBI" id="CHEBI:46398"/>
        <dbReference type="ChEBI" id="CHEBI:46858"/>
        <dbReference type="ChEBI" id="CHEBI:90602"/>
        <dbReference type="EC" id="2.7.7.59"/>
    </reaction>
</comment>
<comment type="catalytic activity">
    <reaction evidence="1">
        <text>[protein-PII]-uridylyl-L-tyrosine + H2O = [protein-PII]-L-tyrosine + UMP + H(+)</text>
        <dbReference type="Rhea" id="RHEA:48600"/>
        <dbReference type="Rhea" id="RHEA-COMP:12147"/>
        <dbReference type="Rhea" id="RHEA-COMP:12148"/>
        <dbReference type="ChEBI" id="CHEBI:15377"/>
        <dbReference type="ChEBI" id="CHEBI:15378"/>
        <dbReference type="ChEBI" id="CHEBI:46858"/>
        <dbReference type="ChEBI" id="CHEBI:57865"/>
        <dbReference type="ChEBI" id="CHEBI:90602"/>
    </reaction>
</comment>
<comment type="cofactor">
    <cofactor evidence="1">
        <name>Mg(2+)</name>
        <dbReference type="ChEBI" id="CHEBI:18420"/>
    </cofactor>
</comment>
<comment type="activity regulation">
    <text evidence="1">Uridylyltransferase (UTase) activity is inhibited by glutamine, while glutamine activates uridylyl-removing (UR) activity.</text>
</comment>
<comment type="domain">
    <text evidence="1">Has four distinct domains: an N-terminal nucleotidyltransferase (NT) domain responsible for UTase activity, a central HD domain that encodes UR activity, and two C-terminal ACT domains that seem to have a role in glutamine sensing.</text>
</comment>
<comment type="similarity">
    <text evidence="1">Belongs to the GlnD family.</text>
</comment>
<sequence>MTATPADRPDPGVAGDADWAAEARPLLVHADMRLCKRFDQGEPTERLLALRARAVDQLMRNAWARCIPADARLSLHAVGGYGRGELFPRSDVDLLVLGETAAQQRHEQALARLFALLWDVGLPISHAVRSPAQCTSAAADQTVLTALIESRPLVADAQARAALAAAIAPQQVWPPRAFFQAKREELHARHQRFGDTADNLEPDIKDGPGGLRDLQTLGWMALRAFGVKDLEALVGLGHVGMDEAAALRREREELARLRYGLHLVANRPEERLRFDYQKTLAERLGFADDPESLGVEKMMQRFYRSAALIRRISDRLLQRFEEQFDGEAVPVQLDAGFSLRRGYLTADADTWPDGDVVQVFALFAQWAAHREVRGLHSLTARALAEVLRDLPAYDVADAIARDRFMALLRGPRAVETLNRMARLGVLGQWIPAFASVSGRMQFDLFHVYTVDQHTLMVLRNIALFAAGRADERFSITHEVWPRLRKPELLLLAGLFHDIAKGRGGDHSELGAVDARAFCLAHRLSEGDTELVTWLVEQHLRMSVTAQKQDISDPEVIHRFATLVGTRERLDYLYLLTCADIAGTSPKLWNAWKDRLLADLYFAARRALREGLEHPPPREERLREARESARTLMQAQGHDDATIDRQFAGMPDENFLRFRPEQLAWQAASLIEVQIGQTLVKARRAVPDNDALEVFVYSPDRDGLFSAIVATLDRKGYGIHRARVLDAPHDAIFDVFEVLPQDSSADGDPQRLAAALRQVLAGDLLKVRPSRRAVPRQLRHFRFAPRVEFSESAGGRRTRISLVAPDRPGLLADVAHVLRMQHLRVHDARIATFGERAEDQFQITDEHDRPLPDAARQALRDALCACLDPT</sequence>
<gene>
    <name evidence="1" type="primary">glnD</name>
    <name type="ordered locus">xcc-b100_2914</name>
</gene>
<reference key="1">
    <citation type="journal article" date="2008" name="J. Biotechnol.">
        <title>The genome of Xanthomonas campestris pv. campestris B100 and its use for the reconstruction of metabolic pathways involved in xanthan biosynthesis.</title>
        <authorList>
            <person name="Vorhoelter F.-J."/>
            <person name="Schneiker S."/>
            <person name="Goesmann A."/>
            <person name="Krause L."/>
            <person name="Bekel T."/>
            <person name="Kaiser O."/>
            <person name="Linke B."/>
            <person name="Patschkowski T."/>
            <person name="Rueckert C."/>
            <person name="Schmid J."/>
            <person name="Sidhu V.K."/>
            <person name="Sieber V."/>
            <person name="Tauch A."/>
            <person name="Watt S.A."/>
            <person name="Weisshaar B."/>
            <person name="Becker A."/>
            <person name="Niehaus K."/>
            <person name="Puehler A."/>
        </authorList>
    </citation>
    <scope>NUCLEOTIDE SEQUENCE [LARGE SCALE GENOMIC DNA]</scope>
    <source>
        <strain>B100</strain>
    </source>
</reference>
<organism>
    <name type="scientific">Xanthomonas campestris pv. campestris (strain B100)</name>
    <dbReference type="NCBI Taxonomy" id="509169"/>
    <lineage>
        <taxon>Bacteria</taxon>
        <taxon>Pseudomonadati</taxon>
        <taxon>Pseudomonadota</taxon>
        <taxon>Gammaproteobacteria</taxon>
        <taxon>Lysobacterales</taxon>
        <taxon>Lysobacteraceae</taxon>
        <taxon>Xanthomonas</taxon>
    </lineage>
</organism>
<keyword id="KW-0378">Hydrolase</keyword>
<keyword id="KW-0460">Magnesium</keyword>
<keyword id="KW-0511">Multifunctional enzyme</keyword>
<keyword id="KW-0548">Nucleotidyltransferase</keyword>
<keyword id="KW-0677">Repeat</keyword>
<keyword id="KW-0808">Transferase</keyword>
<feature type="chain" id="PRO_1000114769" description="Bifunctional uridylyltransferase/uridylyl-removing enzyme">
    <location>
        <begin position="1"/>
        <end position="869"/>
    </location>
</feature>
<feature type="domain" description="HD" evidence="2">
    <location>
        <begin position="450"/>
        <end position="572"/>
    </location>
</feature>
<feature type="domain" description="ACT 1" evidence="1">
    <location>
        <begin position="692"/>
        <end position="771"/>
    </location>
</feature>
<feature type="domain" description="ACT 2" evidence="1">
    <location>
        <begin position="798"/>
        <end position="869"/>
    </location>
</feature>
<feature type="region of interest" description="Uridylyltransferase">
    <location>
        <begin position="1"/>
        <end position="332"/>
    </location>
</feature>
<feature type="region of interest" description="Uridylyl-removing">
    <location>
        <begin position="333"/>
        <end position="691"/>
    </location>
</feature>
<evidence type="ECO:0000255" key="1">
    <source>
        <dbReference type="HAMAP-Rule" id="MF_00277"/>
    </source>
</evidence>
<evidence type="ECO:0000255" key="2">
    <source>
        <dbReference type="PROSITE-ProRule" id="PRU01175"/>
    </source>
</evidence>
<dbReference type="EC" id="2.7.7.59" evidence="1"/>
<dbReference type="EC" id="3.1.4.-" evidence="1"/>
<dbReference type="EMBL" id="AM920689">
    <property type="protein sequence ID" value="CAP52275.1"/>
    <property type="molecule type" value="Genomic_DNA"/>
</dbReference>
<dbReference type="SMR" id="B0RW57"/>
<dbReference type="KEGG" id="xca:xcc-b100_2914"/>
<dbReference type="HOGENOM" id="CLU_012833_0_0_6"/>
<dbReference type="Proteomes" id="UP000001188">
    <property type="component" value="Chromosome"/>
</dbReference>
<dbReference type="GO" id="GO:0008773">
    <property type="term" value="F:[protein-PII] uridylyltransferase activity"/>
    <property type="evidence" value="ECO:0007669"/>
    <property type="project" value="UniProtKB-UniRule"/>
</dbReference>
<dbReference type="GO" id="GO:0008081">
    <property type="term" value="F:phosphoric diester hydrolase activity"/>
    <property type="evidence" value="ECO:0007669"/>
    <property type="project" value="UniProtKB-UniRule"/>
</dbReference>
<dbReference type="GO" id="GO:0006808">
    <property type="term" value="P:regulation of nitrogen utilization"/>
    <property type="evidence" value="ECO:0007669"/>
    <property type="project" value="UniProtKB-UniRule"/>
</dbReference>
<dbReference type="CDD" id="cd04899">
    <property type="entry name" value="ACT_ACR-UUR-like_2"/>
    <property type="match status" value="1"/>
</dbReference>
<dbReference type="CDD" id="cd04900">
    <property type="entry name" value="ACT_UUR-like_1"/>
    <property type="match status" value="1"/>
</dbReference>
<dbReference type="CDD" id="cd00077">
    <property type="entry name" value="HDc"/>
    <property type="match status" value="1"/>
</dbReference>
<dbReference type="CDD" id="cd05401">
    <property type="entry name" value="NT_GlnE_GlnD_like"/>
    <property type="match status" value="1"/>
</dbReference>
<dbReference type="Gene3D" id="3.30.70.260">
    <property type="match status" value="1"/>
</dbReference>
<dbReference type="Gene3D" id="1.10.3090.10">
    <property type="entry name" value="cca-adding enzyme, domain 2"/>
    <property type="match status" value="1"/>
</dbReference>
<dbReference type="HAMAP" id="MF_00277">
    <property type="entry name" value="PII_uridylyl_transf"/>
    <property type="match status" value="1"/>
</dbReference>
<dbReference type="InterPro" id="IPR045865">
    <property type="entry name" value="ACT-like_dom_sf"/>
</dbReference>
<dbReference type="InterPro" id="IPR002912">
    <property type="entry name" value="ACT_dom"/>
</dbReference>
<dbReference type="InterPro" id="IPR003607">
    <property type="entry name" value="HD/PDEase_dom"/>
</dbReference>
<dbReference type="InterPro" id="IPR006674">
    <property type="entry name" value="HD_domain"/>
</dbReference>
<dbReference type="InterPro" id="IPR043519">
    <property type="entry name" value="NT_sf"/>
</dbReference>
<dbReference type="InterPro" id="IPR013546">
    <property type="entry name" value="PII_UdlTrfase/GS_AdlTrfase"/>
</dbReference>
<dbReference type="InterPro" id="IPR002934">
    <property type="entry name" value="Polymerase_NTP_transf_dom"/>
</dbReference>
<dbReference type="InterPro" id="IPR010043">
    <property type="entry name" value="UTase/UR"/>
</dbReference>
<dbReference type="NCBIfam" id="NF003347">
    <property type="entry name" value="PRK04374.1"/>
    <property type="match status" value="1"/>
</dbReference>
<dbReference type="NCBIfam" id="TIGR01693">
    <property type="entry name" value="UTase_glnD"/>
    <property type="match status" value="1"/>
</dbReference>
<dbReference type="PANTHER" id="PTHR47320">
    <property type="entry name" value="BIFUNCTIONAL URIDYLYLTRANSFERASE/URIDYLYL-REMOVING ENZYME"/>
    <property type="match status" value="1"/>
</dbReference>
<dbReference type="PANTHER" id="PTHR47320:SF1">
    <property type="entry name" value="BIFUNCTIONAL URIDYLYLTRANSFERASE_URIDYLYL-REMOVING ENZYME"/>
    <property type="match status" value="1"/>
</dbReference>
<dbReference type="Pfam" id="PF01842">
    <property type="entry name" value="ACT"/>
    <property type="match status" value="1"/>
</dbReference>
<dbReference type="Pfam" id="PF08335">
    <property type="entry name" value="GlnD_UR_UTase"/>
    <property type="match status" value="1"/>
</dbReference>
<dbReference type="Pfam" id="PF01966">
    <property type="entry name" value="HD"/>
    <property type="match status" value="1"/>
</dbReference>
<dbReference type="Pfam" id="PF01909">
    <property type="entry name" value="NTP_transf_2"/>
    <property type="match status" value="1"/>
</dbReference>
<dbReference type="PIRSF" id="PIRSF006288">
    <property type="entry name" value="PII_uridyltransf"/>
    <property type="match status" value="1"/>
</dbReference>
<dbReference type="SMART" id="SM00471">
    <property type="entry name" value="HDc"/>
    <property type="match status" value="1"/>
</dbReference>
<dbReference type="SUPFAM" id="SSF55021">
    <property type="entry name" value="ACT-like"/>
    <property type="match status" value="2"/>
</dbReference>
<dbReference type="SUPFAM" id="SSF109604">
    <property type="entry name" value="HD-domain/PDEase-like"/>
    <property type="match status" value="1"/>
</dbReference>
<dbReference type="SUPFAM" id="SSF81301">
    <property type="entry name" value="Nucleotidyltransferase"/>
    <property type="match status" value="1"/>
</dbReference>
<dbReference type="SUPFAM" id="SSF81593">
    <property type="entry name" value="Nucleotidyltransferase substrate binding subunit/domain"/>
    <property type="match status" value="1"/>
</dbReference>
<dbReference type="PROSITE" id="PS51671">
    <property type="entry name" value="ACT"/>
    <property type="match status" value="2"/>
</dbReference>
<dbReference type="PROSITE" id="PS51831">
    <property type="entry name" value="HD"/>
    <property type="match status" value="1"/>
</dbReference>
<name>GLND_XANCB</name>